<sequence>MTKTIFISTKENTGSIEFQIVNFTKKICKLTDHLKLHKKDYLSQRGLRQMLGKRQRLLVYLSKINLPSYNDLILKLKIREAKKDLS</sequence>
<feature type="chain" id="PRO_0000354251" description="Small ribosomal subunit protein uS15c">
    <location>
        <begin position="1"/>
        <end position="86"/>
    </location>
</feature>
<geneLocation type="plastid"/>
<accession>A7M943</accession>
<name>RR15_CUSGR</name>
<evidence type="ECO:0000250" key="1"/>
<evidence type="ECO:0000305" key="2"/>
<proteinExistence type="inferred from homology"/>
<organism>
    <name type="scientific">Cuscuta gronovii</name>
    <name type="common">Common dodder</name>
    <name type="synonym">Epithymum gronovii</name>
    <dbReference type="NCBI Taxonomy" id="35886"/>
    <lineage>
        <taxon>Eukaryota</taxon>
        <taxon>Viridiplantae</taxon>
        <taxon>Streptophyta</taxon>
        <taxon>Embryophyta</taxon>
        <taxon>Tracheophyta</taxon>
        <taxon>Spermatophyta</taxon>
        <taxon>Magnoliopsida</taxon>
        <taxon>eudicotyledons</taxon>
        <taxon>Gunneridae</taxon>
        <taxon>Pentapetalae</taxon>
        <taxon>asterids</taxon>
        <taxon>lamiids</taxon>
        <taxon>Solanales</taxon>
        <taxon>Convolvulaceae</taxon>
        <taxon>Cuscuteae</taxon>
        <taxon>Cuscuta</taxon>
        <taxon>Cuscuta subgen. Grammica</taxon>
        <taxon>Cuscuta sect. Oxycarpae</taxon>
    </lineage>
</organism>
<keyword id="KW-0934">Plastid</keyword>
<keyword id="KW-0687">Ribonucleoprotein</keyword>
<keyword id="KW-0689">Ribosomal protein</keyword>
<reference key="1">
    <citation type="journal article" date="2007" name="BMC Plant Biol.">
        <title>Complete DNA sequences of the plastid genomes of two parasitic flowering plant species, Cuscuta reflexa and Cuscuta gronovii.</title>
        <authorList>
            <person name="Funk H.T."/>
            <person name="Berg S."/>
            <person name="Krupinska K."/>
            <person name="Maier U.-G."/>
            <person name="Krause K."/>
        </authorList>
    </citation>
    <scope>NUCLEOTIDE SEQUENCE [LARGE SCALE GENOMIC DNA]</scope>
</reference>
<dbReference type="EMBL" id="AM711639">
    <property type="protein sequence ID" value="CAM98371.1"/>
    <property type="molecule type" value="Genomic_DNA"/>
</dbReference>
<dbReference type="RefSeq" id="YP_001430084.1">
    <property type="nucleotide sequence ID" value="NC_009765.1"/>
</dbReference>
<dbReference type="SMR" id="A7M943"/>
<dbReference type="GeneID" id="5536722"/>
<dbReference type="GO" id="GO:0009536">
    <property type="term" value="C:plastid"/>
    <property type="evidence" value="ECO:0007669"/>
    <property type="project" value="UniProtKB-SubCell"/>
</dbReference>
<dbReference type="GO" id="GO:1990904">
    <property type="term" value="C:ribonucleoprotein complex"/>
    <property type="evidence" value="ECO:0007669"/>
    <property type="project" value="UniProtKB-KW"/>
</dbReference>
<dbReference type="GO" id="GO:0005840">
    <property type="term" value="C:ribosome"/>
    <property type="evidence" value="ECO:0007669"/>
    <property type="project" value="UniProtKB-KW"/>
</dbReference>
<dbReference type="GO" id="GO:0003735">
    <property type="term" value="F:structural constituent of ribosome"/>
    <property type="evidence" value="ECO:0007669"/>
    <property type="project" value="InterPro"/>
</dbReference>
<dbReference type="GO" id="GO:0006412">
    <property type="term" value="P:translation"/>
    <property type="evidence" value="ECO:0007669"/>
    <property type="project" value="InterPro"/>
</dbReference>
<dbReference type="CDD" id="cd00353">
    <property type="entry name" value="Ribosomal_S15p_S13e"/>
    <property type="match status" value="1"/>
</dbReference>
<dbReference type="Gene3D" id="1.10.287.10">
    <property type="entry name" value="S15/NS1, RNA-binding"/>
    <property type="match status" value="1"/>
</dbReference>
<dbReference type="HAMAP" id="MF_01343_B">
    <property type="entry name" value="Ribosomal_uS15_B"/>
    <property type="match status" value="1"/>
</dbReference>
<dbReference type="InterPro" id="IPR000589">
    <property type="entry name" value="Ribosomal_uS15"/>
</dbReference>
<dbReference type="InterPro" id="IPR005290">
    <property type="entry name" value="Ribosomal_uS15_bac-type"/>
</dbReference>
<dbReference type="InterPro" id="IPR009068">
    <property type="entry name" value="uS15_NS1_RNA-bd_sf"/>
</dbReference>
<dbReference type="NCBIfam" id="TIGR00952">
    <property type="entry name" value="S15_bact"/>
    <property type="match status" value="1"/>
</dbReference>
<dbReference type="PANTHER" id="PTHR23321">
    <property type="entry name" value="RIBOSOMAL PROTEIN S15, BACTERIAL AND ORGANELLAR"/>
    <property type="match status" value="1"/>
</dbReference>
<dbReference type="PANTHER" id="PTHR23321:SF26">
    <property type="entry name" value="SMALL RIBOSOMAL SUBUNIT PROTEIN US15M"/>
    <property type="match status" value="1"/>
</dbReference>
<dbReference type="Pfam" id="PF00312">
    <property type="entry name" value="Ribosomal_S15"/>
    <property type="match status" value="1"/>
</dbReference>
<dbReference type="SMART" id="SM01387">
    <property type="entry name" value="Ribosomal_S15"/>
    <property type="match status" value="1"/>
</dbReference>
<dbReference type="SUPFAM" id="SSF47060">
    <property type="entry name" value="S15/NS1 RNA-binding domain"/>
    <property type="match status" value="1"/>
</dbReference>
<dbReference type="PROSITE" id="PS00362">
    <property type="entry name" value="RIBOSOMAL_S15"/>
    <property type="match status" value="1"/>
</dbReference>
<comment type="subunit">
    <text evidence="1">Part of the 30S ribosomal subunit.</text>
</comment>
<comment type="subcellular location">
    <subcellularLocation>
        <location>Plastid</location>
    </subcellularLocation>
</comment>
<comment type="similarity">
    <text evidence="2">Belongs to the universal ribosomal protein uS15 family.</text>
</comment>
<comment type="caution">
    <text evidence="2">Young tissue from this organism is photosynthetic and contains some thylakoids, although the photosynthetic activity does not exceed the light compensation point.</text>
</comment>
<protein>
    <recommendedName>
        <fullName evidence="2">Small ribosomal subunit protein uS15c</fullName>
    </recommendedName>
    <alternativeName>
        <fullName>30S ribosomal protein S15, plastid</fullName>
    </alternativeName>
</protein>
<gene>
    <name type="primary">rps15</name>
</gene>